<proteinExistence type="inferred from homology"/>
<name>ATG7_CRYNB</name>
<evidence type="ECO:0000250" key="1"/>
<evidence type="ECO:0000256" key="2">
    <source>
        <dbReference type="SAM" id="MobiDB-lite"/>
    </source>
</evidence>
<evidence type="ECO:0000305" key="3"/>
<accession>P0CM39</accession>
<accession>Q55NS2</accession>
<accession>Q5KC57</accession>
<reference key="1">
    <citation type="journal article" date="2005" name="Science">
        <title>The genome of the basidiomycetous yeast and human pathogen Cryptococcus neoformans.</title>
        <authorList>
            <person name="Loftus B.J."/>
            <person name="Fung E."/>
            <person name="Roncaglia P."/>
            <person name="Rowley D."/>
            <person name="Amedeo P."/>
            <person name="Bruno D."/>
            <person name="Vamathevan J."/>
            <person name="Miranda M."/>
            <person name="Anderson I.J."/>
            <person name="Fraser J.A."/>
            <person name="Allen J.E."/>
            <person name="Bosdet I.E."/>
            <person name="Brent M.R."/>
            <person name="Chiu R."/>
            <person name="Doering T.L."/>
            <person name="Donlin M.J."/>
            <person name="D'Souza C.A."/>
            <person name="Fox D.S."/>
            <person name="Grinberg V."/>
            <person name="Fu J."/>
            <person name="Fukushima M."/>
            <person name="Haas B.J."/>
            <person name="Huang J.C."/>
            <person name="Janbon G."/>
            <person name="Jones S.J.M."/>
            <person name="Koo H.L."/>
            <person name="Krzywinski M.I."/>
            <person name="Kwon-Chung K.J."/>
            <person name="Lengeler K.B."/>
            <person name="Maiti R."/>
            <person name="Marra M.A."/>
            <person name="Marra R.E."/>
            <person name="Mathewson C.A."/>
            <person name="Mitchell T.G."/>
            <person name="Pertea M."/>
            <person name="Riggs F.R."/>
            <person name="Salzberg S.L."/>
            <person name="Schein J.E."/>
            <person name="Shvartsbeyn A."/>
            <person name="Shin H."/>
            <person name="Shumway M."/>
            <person name="Specht C.A."/>
            <person name="Suh B.B."/>
            <person name="Tenney A."/>
            <person name="Utterback T.R."/>
            <person name="Wickes B.L."/>
            <person name="Wortman J.R."/>
            <person name="Wye N.H."/>
            <person name="Kronstad J.W."/>
            <person name="Lodge J.K."/>
            <person name="Heitman J."/>
            <person name="Davis R.W."/>
            <person name="Fraser C.M."/>
            <person name="Hyman R.W."/>
        </authorList>
    </citation>
    <scope>NUCLEOTIDE SEQUENCE [LARGE SCALE GENOMIC DNA]</scope>
    <source>
        <strain>B-3501A</strain>
    </source>
</reference>
<sequence>MAPLQFQPLASQPTPAFWAALAAHKLNHLKLDDSHLPITAQIEPAKRVLINKERVDDTADVGIDGSLVVGGDAFEAERGRLPPNAVSVTGTLKIFNTIEEFKDTSAKKRLFDDLVSQMLESFDTDRPVLNPFLLVTFADLKKYVYHYWFAFPALVSSPAWVMDGEFMPVDEIEDIRNLAQSHFQHNTAAFLLKGAAPHLSAAPLSSCSTFYDKTQSEMVTVVFHDTSSLPSNPGWGLRNVLYYLSAKHGITSLVVICLRGGSSSTQASLSLSSPPSTAPAKPPQAVGWERHPSGKLSPRVADLGPMMDPTRLAAQAVDLNLKLIKWRLLPALDLDKISGTRCLLLGAGTLGCYVARILMGWGVRNITLVDSSTVSYSNPVRQPLFTFSDCLNGGLPKAPTAAKKLQEIFPGVNAQGVVLGIPMPGHPISSSDDAVEKDVAKLEALVKSHDAVFLLMDSRESRWLPTVLGRKWGKVVVNAALGFDSFLVMRHGAGAGARRIQWDEGGVGEKGLGCYYCNDIVAPADSLSDRTLDQMCTVTRPGVAPIAAAMAVELLISVLQHPLGVHAPAERPDTAETSTSTKTSPLGCVPHQLRGQMYQWKTQIVEGEAFDRCTGCSDYVLNEYETNGFAFLRRVFNEKDYLEKVTGLDELYRESEKVIEGMEGLDWDSEGEE</sequence>
<keyword id="KW-0072">Autophagy</keyword>
<keyword id="KW-0963">Cytoplasm</keyword>
<keyword id="KW-0653">Protein transport</keyword>
<keyword id="KW-0813">Transport</keyword>
<keyword id="KW-0833">Ubl conjugation pathway</keyword>
<protein>
    <recommendedName>
        <fullName>Ubiquitin-like modifier-activating enzyme ATG7</fullName>
    </recommendedName>
    <alternativeName>
        <fullName>ATG12-activating enzyme E1 ATG7</fullName>
    </alternativeName>
    <alternativeName>
        <fullName>Autophagy-related protein 7</fullName>
    </alternativeName>
</protein>
<comment type="function">
    <text evidence="1">E1-like activating enzyme involved in the 2 ubiquitin-like systems required for cytoplasm to vacuole transport (Cvt) and autophagy. Activates ATG12 for its conjugation with ATG5 and ATG8 for its conjugation with phosphatidylethanolamine. Both systems are needed for the ATG8 association to Cvt vesicles and autophagosomes membranes. Autophagy is essential for maintenance of amino acid levels and protein synthesis under nitrogen starvation. Required for selective autophagic degradation of the nucleus (nucleophagy) as well as for mitophagy which contributes to regulate mitochondrial quantity and quality by eliminating the mitochondria to a basal level to fulfill cellular energy requirements and preventing excess ROS production. Plays a role in the regulation of filamentous growth and chronological longevity (By similarity).</text>
</comment>
<comment type="subunit">
    <text evidence="1">Homodimer.</text>
</comment>
<comment type="subcellular location">
    <subcellularLocation>
        <location evidence="1">Cytoplasm</location>
    </subcellularLocation>
    <subcellularLocation>
        <location evidence="1">Preautophagosomal structure</location>
    </subcellularLocation>
</comment>
<comment type="domain">
    <text evidence="1">The GxGxxG motif is important for the function, possibly through binding with ATP.</text>
</comment>
<comment type="similarity">
    <text evidence="3">Belongs to the ATG7 family.</text>
</comment>
<dbReference type="EMBL" id="AAEY01000040">
    <property type="protein sequence ID" value="EAL19445.1"/>
    <property type="molecule type" value="Genomic_DNA"/>
</dbReference>
<dbReference type="RefSeq" id="XP_774092.1">
    <property type="nucleotide sequence ID" value="XM_768999.1"/>
</dbReference>
<dbReference type="SMR" id="P0CM39"/>
<dbReference type="GeneID" id="4937519"/>
<dbReference type="KEGG" id="cnb:CNBH0170"/>
<dbReference type="VEuPathDB" id="FungiDB:CNBH0170"/>
<dbReference type="HOGENOM" id="CLU_012998_2_1_1"/>
<dbReference type="OrthoDB" id="6829at5206"/>
<dbReference type="GO" id="GO:0005829">
    <property type="term" value="C:cytosol"/>
    <property type="evidence" value="ECO:0007669"/>
    <property type="project" value="EnsemblFungi"/>
</dbReference>
<dbReference type="GO" id="GO:0097632">
    <property type="term" value="C:extrinsic component of phagophore assembly site membrane"/>
    <property type="evidence" value="ECO:0007669"/>
    <property type="project" value="EnsemblFungi"/>
</dbReference>
<dbReference type="GO" id="GO:0019778">
    <property type="term" value="F:Atg12 activating enzyme activity"/>
    <property type="evidence" value="ECO:0007669"/>
    <property type="project" value="EnsemblFungi"/>
</dbReference>
<dbReference type="GO" id="GO:0019779">
    <property type="term" value="F:Atg8 activating enzyme activity"/>
    <property type="evidence" value="ECO:0007669"/>
    <property type="project" value="EnsemblFungi"/>
</dbReference>
<dbReference type="GO" id="GO:0042802">
    <property type="term" value="F:identical protein binding"/>
    <property type="evidence" value="ECO:0007669"/>
    <property type="project" value="EnsemblFungi"/>
</dbReference>
<dbReference type="GO" id="GO:0000045">
    <property type="term" value="P:autophagosome assembly"/>
    <property type="evidence" value="ECO:0007669"/>
    <property type="project" value="TreeGrafter"/>
</dbReference>
<dbReference type="GO" id="GO:0000422">
    <property type="term" value="P:autophagy of mitochondrion"/>
    <property type="evidence" value="ECO:0007669"/>
    <property type="project" value="EnsemblFungi"/>
</dbReference>
<dbReference type="GO" id="GO:0006995">
    <property type="term" value="P:cellular response to nitrogen starvation"/>
    <property type="evidence" value="ECO:0007669"/>
    <property type="project" value="TreeGrafter"/>
</dbReference>
<dbReference type="GO" id="GO:0034727">
    <property type="term" value="P:piecemeal microautophagy of the nucleus"/>
    <property type="evidence" value="ECO:0007669"/>
    <property type="project" value="EnsemblFungi"/>
</dbReference>
<dbReference type="GO" id="GO:0032446">
    <property type="term" value="P:protein modification by small protein conjugation"/>
    <property type="evidence" value="ECO:0007669"/>
    <property type="project" value="EnsemblFungi"/>
</dbReference>
<dbReference type="GO" id="GO:0015031">
    <property type="term" value="P:protein transport"/>
    <property type="evidence" value="ECO:0007669"/>
    <property type="project" value="UniProtKB-KW"/>
</dbReference>
<dbReference type="CDD" id="cd01486">
    <property type="entry name" value="Apg7"/>
    <property type="match status" value="1"/>
</dbReference>
<dbReference type="FunFam" id="3.40.50.720:FF:000243">
    <property type="entry name" value="Ubiquitin-like modifier-activating enzyme ATG7"/>
    <property type="match status" value="1"/>
</dbReference>
<dbReference type="Gene3D" id="3.40.50.720">
    <property type="entry name" value="NAD(P)-binding Rossmann-like Domain"/>
    <property type="match status" value="1"/>
</dbReference>
<dbReference type="Gene3D" id="3.40.140.100">
    <property type="entry name" value="Ubiquitin-like modifier-activating enzyme ATG7 C-terminal domain"/>
    <property type="match status" value="1"/>
</dbReference>
<dbReference type="Gene3D" id="3.40.140.70">
    <property type="entry name" value="Ubiquitin-like modifier-activating enzyme ATG7 N-terminal domain"/>
    <property type="match status" value="1"/>
</dbReference>
<dbReference type="InterPro" id="IPR006285">
    <property type="entry name" value="Atg7"/>
</dbReference>
<dbReference type="InterPro" id="IPR032197">
    <property type="entry name" value="Atg7_N"/>
</dbReference>
<dbReference type="InterPro" id="IPR042522">
    <property type="entry name" value="Atg7_N_1"/>
</dbReference>
<dbReference type="InterPro" id="IPR042523">
    <property type="entry name" value="Atg7_N_2"/>
</dbReference>
<dbReference type="InterPro" id="IPR045886">
    <property type="entry name" value="ThiF/MoeB/HesA"/>
</dbReference>
<dbReference type="InterPro" id="IPR000594">
    <property type="entry name" value="ThiF_NAD_FAD-bd"/>
</dbReference>
<dbReference type="InterPro" id="IPR035985">
    <property type="entry name" value="Ubiquitin-activating_enz"/>
</dbReference>
<dbReference type="NCBIfam" id="TIGR01381">
    <property type="entry name" value="E1_like_apg7"/>
    <property type="match status" value="1"/>
</dbReference>
<dbReference type="PANTHER" id="PTHR10953">
    <property type="entry name" value="UBIQUITIN-ACTIVATING ENZYME E1"/>
    <property type="match status" value="1"/>
</dbReference>
<dbReference type="PANTHER" id="PTHR10953:SF3">
    <property type="entry name" value="UBIQUITIN-LIKE MODIFIER-ACTIVATING ENZYME ATG7"/>
    <property type="match status" value="1"/>
</dbReference>
<dbReference type="Pfam" id="PF16420">
    <property type="entry name" value="ATG7_N"/>
    <property type="match status" value="1"/>
</dbReference>
<dbReference type="Pfam" id="PF00899">
    <property type="entry name" value="ThiF"/>
    <property type="match status" value="1"/>
</dbReference>
<dbReference type="SUPFAM" id="SSF69572">
    <property type="entry name" value="Activating enzymes of the ubiquitin-like proteins"/>
    <property type="match status" value="1"/>
</dbReference>
<feature type="chain" id="PRO_0000410021" description="Ubiquitin-like modifier-activating enzyme ATG7">
    <location>
        <begin position="1"/>
        <end position="673"/>
    </location>
</feature>
<feature type="region of interest" description="Disordered" evidence="2">
    <location>
        <begin position="268"/>
        <end position="293"/>
    </location>
</feature>
<feature type="short sequence motif" description="GXGXXG motif">
    <location>
        <begin position="346"/>
        <end position="351"/>
    </location>
</feature>
<feature type="active site" description="Glycyl thioester intermediate" evidence="1">
    <location>
        <position position="536"/>
    </location>
</feature>
<gene>
    <name type="primary">ATG7</name>
    <name type="ordered locus">CNBH0170</name>
</gene>
<organism>
    <name type="scientific">Cryptococcus neoformans var. neoformans serotype D (strain B-3501A)</name>
    <name type="common">Filobasidiella neoformans</name>
    <dbReference type="NCBI Taxonomy" id="283643"/>
    <lineage>
        <taxon>Eukaryota</taxon>
        <taxon>Fungi</taxon>
        <taxon>Dikarya</taxon>
        <taxon>Basidiomycota</taxon>
        <taxon>Agaricomycotina</taxon>
        <taxon>Tremellomycetes</taxon>
        <taxon>Tremellales</taxon>
        <taxon>Cryptococcaceae</taxon>
        <taxon>Cryptococcus</taxon>
        <taxon>Cryptococcus neoformans species complex</taxon>
    </lineage>
</organism>